<accession>B8E465</accession>
<proteinExistence type="inferred from homology"/>
<name>PPNP_SHEB2</name>
<dbReference type="EC" id="2.4.2.1" evidence="1"/>
<dbReference type="EC" id="2.4.2.2" evidence="1"/>
<dbReference type="EMBL" id="CP001252">
    <property type="protein sequence ID" value="ACK44806.1"/>
    <property type="molecule type" value="Genomic_DNA"/>
</dbReference>
<dbReference type="RefSeq" id="WP_006079743.1">
    <property type="nucleotide sequence ID" value="NC_011663.1"/>
</dbReference>
<dbReference type="SMR" id="B8E465"/>
<dbReference type="KEGG" id="sbp:Sbal223_0269"/>
<dbReference type="HOGENOM" id="CLU_157874_1_0_6"/>
<dbReference type="Proteomes" id="UP000002507">
    <property type="component" value="Chromosome"/>
</dbReference>
<dbReference type="GO" id="GO:0005829">
    <property type="term" value="C:cytosol"/>
    <property type="evidence" value="ECO:0007669"/>
    <property type="project" value="TreeGrafter"/>
</dbReference>
<dbReference type="GO" id="GO:0047975">
    <property type="term" value="F:guanosine phosphorylase activity"/>
    <property type="evidence" value="ECO:0007669"/>
    <property type="project" value="UniProtKB-EC"/>
</dbReference>
<dbReference type="GO" id="GO:0004731">
    <property type="term" value="F:purine-nucleoside phosphorylase activity"/>
    <property type="evidence" value="ECO:0007669"/>
    <property type="project" value="UniProtKB-UniRule"/>
</dbReference>
<dbReference type="GO" id="GO:0009032">
    <property type="term" value="F:thymidine phosphorylase activity"/>
    <property type="evidence" value="ECO:0007669"/>
    <property type="project" value="UniProtKB-EC"/>
</dbReference>
<dbReference type="GO" id="GO:0004850">
    <property type="term" value="F:uridine phosphorylase activity"/>
    <property type="evidence" value="ECO:0007669"/>
    <property type="project" value="UniProtKB-EC"/>
</dbReference>
<dbReference type="CDD" id="cd20296">
    <property type="entry name" value="cupin_PpnP-like"/>
    <property type="match status" value="1"/>
</dbReference>
<dbReference type="FunFam" id="2.60.120.10:FF:000016">
    <property type="entry name" value="Pyrimidine/purine nucleoside phosphorylase"/>
    <property type="match status" value="1"/>
</dbReference>
<dbReference type="Gene3D" id="2.60.120.10">
    <property type="entry name" value="Jelly Rolls"/>
    <property type="match status" value="1"/>
</dbReference>
<dbReference type="HAMAP" id="MF_01537">
    <property type="entry name" value="Nucleos_phosphorylase_PpnP"/>
    <property type="match status" value="1"/>
</dbReference>
<dbReference type="InterPro" id="IPR009664">
    <property type="entry name" value="Ppnp"/>
</dbReference>
<dbReference type="InterPro" id="IPR014710">
    <property type="entry name" value="RmlC-like_jellyroll"/>
</dbReference>
<dbReference type="InterPro" id="IPR011051">
    <property type="entry name" value="RmlC_Cupin_sf"/>
</dbReference>
<dbReference type="PANTHER" id="PTHR36540">
    <property type="entry name" value="PYRIMIDINE/PURINE NUCLEOSIDE PHOSPHORYLASE"/>
    <property type="match status" value="1"/>
</dbReference>
<dbReference type="PANTHER" id="PTHR36540:SF1">
    <property type="entry name" value="PYRIMIDINE_PURINE NUCLEOSIDE PHOSPHORYLASE"/>
    <property type="match status" value="1"/>
</dbReference>
<dbReference type="Pfam" id="PF06865">
    <property type="entry name" value="Ppnp"/>
    <property type="match status" value="1"/>
</dbReference>
<dbReference type="SUPFAM" id="SSF51182">
    <property type="entry name" value="RmlC-like cupins"/>
    <property type="match status" value="1"/>
</dbReference>
<evidence type="ECO:0000255" key="1">
    <source>
        <dbReference type="HAMAP-Rule" id="MF_01537"/>
    </source>
</evidence>
<keyword id="KW-0328">Glycosyltransferase</keyword>
<keyword id="KW-0808">Transferase</keyword>
<comment type="function">
    <text evidence="1">Catalyzes the phosphorolysis of diverse nucleosides, yielding D-ribose 1-phosphate and the respective free bases. Can use uridine, adenosine, guanosine, cytidine, thymidine, inosine and xanthosine as substrates. Also catalyzes the reverse reactions.</text>
</comment>
<comment type="catalytic activity">
    <reaction evidence="1">
        <text>a purine D-ribonucleoside + phosphate = a purine nucleobase + alpha-D-ribose 1-phosphate</text>
        <dbReference type="Rhea" id="RHEA:19805"/>
        <dbReference type="ChEBI" id="CHEBI:26386"/>
        <dbReference type="ChEBI" id="CHEBI:43474"/>
        <dbReference type="ChEBI" id="CHEBI:57720"/>
        <dbReference type="ChEBI" id="CHEBI:142355"/>
        <dbReference type="EC" id="2.4.2.1"/>
    </reaction>
</comment>
<comment type="catalytic activity">
    <reaction evidence="1">
        <text>adenosine + phosphate = alpha-D-ribose 1-phosphate + adenine</text>
        <dbReference type="Rhea" id="RHEA:27642"/>
        <dbReference type="ChEBI" id="CHEBI:16335"/>
        <dbReference type="ChEBI" id="CHEBI:16708"/>
        <dbReference type="ChEBI" id="CHEBI:43474"/>
        <dbReference type="ChEBI" id="CHEBI:57720"/>
        <dbReference type="EC" id="2.4.2.1"/>
    </reaction>
</comment>
<comment type="catalytic activity">
    <reaction evidence="1">
        <text>cytidine + phosphate = cytosine + alpha-D-ribose 1-phosphate</text>
        <dbReference type="Rhea" id="RHEA:52540"/>
        <dbReference type="ChEBI" id="CHEBI:16040"/>
        <dbReference type="ChEBI" id="CHEBI:17562"/>
        <dbReference type="ChEBI" id="CHEBI:43474"/>
        <dbReference type="ChEBI" id="CHEBI:57720"/>
        <dbReference type="EC" id="2.4.2.2"/>
    </reaction>
</comment>
<comment type="catalytic activity">
    <reaction evidence="1">
        <text>guanosine + phosphate = alpha-D-ribose 1-phosphate + guanine</text>
        <dbReference type="Rhea" id="RHEA:13233"/>
        <dbReference type="ChEBI" id="CHEBI:16235"/>
        <dbReference type="ChEBI" id="CHEBI:16750"/>
        <dbReference type="ChEBI" id="CHEBI:43474"/>
        <dbReference type="ChEBI" id="CHEBI:57720"/>
        <dbReference type="EC" id="2.4.2.1"/>
    </reaction>
</comment>
<comment type="catalytic activity">
    <reaction evidence="1">
        <text>inosine + phosphate = alpha-D-ribose 1-phosphate + hypoxanthine</text>
        <dbReference type="Rhea" id="RHEA:27646"/>
        <dbReference type="ChEBI" id="CHEBI:17368"/>
        <dbReference type="ChEBI" id="CHEBI:17596"/>
        <dbReference type="ChEBI" id="CHEBI:43474"/>
        <dbReference type="ChEBI" id="CHEBI:57720"/>
        <dbReference type="EC" id="2.4.2.1"/>
    </reaction>
</comment>
<comment type="catalytic activity">
    <reaction evidence="1">
        <text>thymidine + phosphate = 2-deoxy-alpha-D-ribose 1-phosphate + thymine</text>
        <dbReference type="Rhea" id="RHEA:16037"/>
        <dbReference type="ChEBI" id="CHEBI:17748"/>
        <dbReference type="ChEBI" id="CHEBI:17821"/>
        <dbReference type="ChEBI" id="CHEBI:43474"/>
        <dbReference type="ChEBI" id="CHEBI:57259"/>
        <dbReference type="EC" id="2.4.2.2"/>
    </reaction>
</comment>
<comment type="catalytic activity">
    <reaction evidence="1">
        <text>uridine + phosphate = alpha-D-ribose 1-phosphate + uracil</text>
        <dbReference type="Rhea" id="RHEA:24388"/>
        <dbReference type="ChEBI" id="CHEBI:16704"/>
        <dbReference type="ChEBI" id="CHEBI:17568"/>
        <dbReference type="ChEBI" id="CHEBI:43474"/>
        <dbReference type="ChEBI" id="CHEBI:57720"/>
        <dbReference type="EC" id="2.4.2.2"/>
    </reaction>
</comment>
<comment type="catalytic activity">
    <reaction evidence="1">
        <text>xanthosine + phosphate = alpha-D-ribose 1-phosphate + xanthine</text>
        <dbReference type="Rhea" id="RHEA:27638"/>
        <dbReference type="ChEBI" id="CHEBI:17712"/>
        <dbReference type="ChEBI" id="CHEBI:18107"/>
        <dbReference type="ChEBI" id="CHEBI:43474"/>
        <dbReference type="ChEBI" id="CHEBI:57720"/>
        <dbReference type="EC" id="2.4.2.1"/>
    </reaction>
</comment>
<comment type="similarity">
    <text evidence="1">Belongs to the nucleoside phosphorylase PpnP family.</text>
</comment>
<reference key="1">
    <citation type="submission" date="2008-12" db="EMBL/GenBank/DDBJ databases">
        <title>Complete sequence of chromosome of Shewanella baltica OS223.</title>
        <authorList>
            <consortium name="US DOE Joint Genome Institute"/>
            <person name="Lucas S."/>
            <person name="Copeland A."/>
            <person name="Lapidus A."/>
            <person name="Glavina del Rio T."/>
            <person name="Dalin E."/>
            <person name="Tice H."/>
            <person name="Bruce D."/>
            <person name="Goodwin L."/>
            <person name="Pitluck S."/>
            <person name="Chertkov O."/>
            <person name="Meincke L."/>
            <person name="Brettin T."/>
            <person name="Detter J.C."/>
            <person name="Han C."/>
            <person name="Kuske C.R."/>
            <person name="Larimer F."/>
            <person name="Land M."/>
            <person name="Hauser L."/>
            <person name="Kyrpides N."/>
            <person name="Ovchinnikova G."/>
            <person name="Brettar I."/>
            <person name="Rodrigues J."/>
            <person name="Konstantinidis K."/>
            <person name="Tiedje J."/>
        </authorList>
    </citation>
    <scope>NUCLEOTIDE SEQUENCE [LARGE SCALE GENOMIC DNA]</scope>
    <source>
        <strain>OS223</strain>
    </source>
</reference>
<sequence length="103" mass="11495">MSLLEQVSVSKKANIYFDGKVASRSVFFADGSKQTLGVVQPGEYEFSTSQGEIMEVISGRFEVLLPETTTWQEFNEGTQFELAANVSFKIRNTAIAEYCCSYL</sequence>
<gene>
    <name evidence="1" type="primary">ppnP</name>
    <name type="ordered locus">Sbal223_0269</name>
</gene>
<feature type="chain" id="PRO_1000185199" description="Pyrimidine/purine nucleoside phosphorylase">
    <location>
        <begin position="1"/>
        <end position="103"/>
    </location>
</feature>
<protein>
    <recommendedName>
        <fullName evidence="1">Pyrimidine/purine nucleoside phosphorylase</fullName>
        <ecNumber evidence="1">2.4.2.1</ecNumber>
        <ecNumber evidence="1">2.4.2.2</ecNumber>
    </recommendedName>
    <alternativeName>
        <fullName evidence="1">Adenosine phosphorylase</fullName>
    </alternativeName>
    <alternativeName>
        <fullName evidence="1">Cytidine phosphorylase</fullName>
    </alternativeName>
    <alternativeName>
        <fullName evidence="1">Guanosine phosphorylase</fullName>
    </alternativeName>
    <alternativeName>
        <fullName evidence="1">Inosine phosphorylase</fullName>
    </alternativeName>
    <alternativeName>
        <fullName evidence="1">Thymidine phosphorylase</fullName>
    </alternativeName>
    <alternativeName>
        <fullName evidence="1">Uridine phosphorylase</fullName>
    </alternativeName>
    <alternativeName>
        <fullName evidence="1">Xanthosine phosphorylase</fullName>
    </alternativeName>
</protein>
<organism>
    <name type="scientific">Shewanella baltica (strain OS223)</name>
    <dbReference type="NCBI Taxonomy" id="407976"/>
    <lineage>
        <taxon>Bacteria</taxon>
        <taxon>Pseudomonadati</taxon>
        <taxon>Pseudomonadota</taxon>
        <taxon>Gammaproteobacteria</taxon>
        <taxon>Alteromonadales</taxon>
        <taxon>Shewanellaceae</taxon>
        <taxon>Shewanella</taxon>
    </lineage>
</organism>